<feature type="chain" id="PRO_1000164717" description="Carbamoyl phosphate synthase large chain">
    <location>
        <begin position="1"/>
        <end position="1058"/>
    </location>
</feature>
<feature type="domain" description="ATP-grasp 1" evidence="1">
    <location>
        <begin position="133"/>
        <end position="327"/>
    </location>
</feature>
<feature type="domain" description="ATP-grasp 2" evidence="1">
    <location>
        <begin position="671"/>
        <end position="861"/>
    </location>
</feature>
<feature type="domain" description="MGS-like" evidence="1">
    <location>
        <begin position="930"/>
        <end position="1058"/>
    </location>
</feature>
<feature type="region of interest" description="Carboxyphosphate synthetic domain" evidence="1">
    <location>
        <begin position="1"/>
        <end position="401"/>
    </location>
</feature>
<feature type="region of interest" description="Oligomerization domain" evidence="1">
    <location>
        <begin position="402"/>
        <end position="546"/>
    </location>
</feature>
<feature type="region of interest" description="Carbamoyl phosphate synthetic domain" evidence="1">
    <location>
        <begin position="547"/>
        <end position="929"/>
    </location>
</feature>
<feature type="region of interest" description="Allosteric domain" evidence="1">
    <location>
        <begin position="930"/>
        <end position="1058"/>
    </location>
</feature>
<feature type="binding site" evidence="1">
    <location>
        <position position="129"/>
    </location>
    <ligand>
        <name>ATP</name>
        <dbReference type="ChEBI" id="CHEBI:30616"/>
        <label>1</label>
    </ligand>
</feature>
<feature type="binding site" evidence="1">
    <location>
        <position position="169"/>
    </location>
    <ligand>
        <name>ATP</name>
        <dbReference type="ChEBI" id="CHEBI:30616"/>
        <label>1</label>
    </ligand>
</feature>
<feature type="binding site" evidence="1">
    <location>
        <position position="175"/>
    </location>
    <ligand>
        <name>ATP</name>
        <dbReference type="ChEBI" id="CHEBI:30616"/>
        <label>1</label>
    </ligand>
</feature>
<feature type="binding site" evidence="1">
    <location>
        <position position="176"/>
    </location>
    <ligand>
        <name>ATP</name>
        <dbReference type="ChEBI" id="CHEBI:30616"/>
        <label>1</label>
    </ligand>
</feature>
<feature type="binding site" evidence="1">
    <location>
        <position position="208"/>
    </location>
    <ligand>
        <name>ATP</name>
        <dbReference type="ChEBI" id="CHEBI:30616"/>
        <label>1</label>
    </ligand>
</feature>
<feature type="binding site" evidence="1">
    <location>
        <position position="210"/>
    </location>
    <ligand>
        <name>ATP</name>
        <dbReference type="ChEBI" id="CHEBI:30616"/>
        <label>1</label>
    </ligand>
</feature>
<feature type="binding site" evidence="1">
    <location>
        <position position="215"/>
    </location>
    <ligand>
        <name>ATP</name>
        <dbReference type="ChEBI" id="CHEBI:30616"/>
        <label>1</label>
    </ligand>
</feature>
<feature type="binding site" evidence="1">
    <location>
        <position position="241"/>
    </location>
    <ligand>
        <name>ATP</name>
        <dbReference type="ChEBI" id="CHEBI:30616"/>
        <label>1</label>
    </ligand>
</feature>
<feature type="binding site" evidence="1">
    <location>
        <position position="242"/>
    </location>
    <ligand>
        <name>ATP</name>
        <dbReference type="ChEBI" id="CHEBI:30616"/>
        <label>1</label>
    </ligand>
</feature>
<feature type="binding site" evidence="1">
    <location>
        <position position="243"/>
    </location>
    <ligand>
        <name>ATP</name>
        <dbReference type="ChEBI" id="CHEBI:30616"/>
        <label>1</label>
    </ligand>
</feature>
<feature type="binding site" evidence="1">
    <location>
        <position position="284"/>
    </location>
    <ligand>
        <name>ATP</name>
        <dbReference type="ChEBI" id="CHEBI:30616"/>
        <label>1</label>
    </ligand>
</feature>
<feature type="binding site" evidence="1">
    <location>
        <position position="284"/>
    </location>
    <ligand>
        <name>Mg(2+)</name>
        <dbReference type="ChEBI" id="CHEBI:18420"/>
        <label>1</label>
    </ligand>
</feature>
<feature type="binding site" evidence="1">
    <location>
        <position position="284"/>
    </location>
    <ligand>
        <name>Mn(2+)</name>
        <dbReference type="ChEBI" id="CHEBI:29035"/>
        <label>1</label>
    </ligand>
</feature>
<feature type="binding site" evidence="1">
    <location>
        <position position="298"/>
    </location>
    <ligand>
        <name>ATP</name>
        <dbReference type="ChEBI" id="CHEBI:30616"/>
        <label>1</label>
    </ligand>
</feature>
<feature type="binding site" evidence="1">
    <location>
        <position position="298"/>
    </location>
    <ligand>
        <name>Mg(2+)</name>
        <dbReference type="ChEBI" id="CHEBI:18420"/>
        <label>1</label>
    </ligand>
</feature>
<feature type="binding site" evidence="1">
    <location>
        <position position="298"/>
    </location>
    <ligand>
        <name>Mg(2+)</name>
        <dbReference type="ChEBI" id="CHEBI:18420"/>
        <label>2</label>
    </ligand>
</feature>
<feature type="binding site" evidence="1">
    <location>
        <position position="298"/>
    </location>
    <ligand>
        <name>Mn(2+)</name>
        <dbReference type="ChEBI" id="CHEBI:29035"/>
        <label>1</label>
    </ligand>
</feature>
<feature type="binding site" evidence="1">
    <location>
        <position position="298"/>
    </location>
    <ligand>
        <name>Mn(2+)</name>
        <dbReference type="ChEBI" id="CHEBI:29035"/>
        <label>2</label>
    </ligand>
</feature>
<feature type="binding site" evidence="1">
    <location>
        <position position="300"/>
    </location>
    <ligand>
        <name>Mg(2+)</name>
        <dbReference type="ChEBI" id="CHEBI:18420"/>
        <label>2</label>
    </ligand>
</feature>
<feature type="binding site" evidence="1">
    <location>
        <position position="300"/>
    </location>
    <ligand>
        <name>Mn(2+)</name>
        <dbReference type="ChEBI" id="CHEBI:29035"/>
        <label>2</label>
    </ligand>
</feature>
<feature type="binding site" evidence="1">
    <location>
        <position position="707"/>
    </location>
    <ligand>
        <name>ATP</name>
        <dbReference type="ChEBI" id="CHEBI:30616"/>
        <label>2</label>
    </ligand>
</feature>
<feature type="binding site" evidence="1">
    <location>
        <position position="746"/>
    </location>
    <ligand>
        <name>ATP</name>
        <dbReference type="ChEBI" id="CHEBI:30616"/>
        <label>2</label>
    </ligand>
</feature>
<feature type="binding site" evidence="1">
    <location>
        <position position="748"/>
    </location>
    <ligand>
        <name>ATP</name>
        <dbReference type="ChEBI" id="CHEBI:30616"/>
        <label>2</label>
    </ligand>
</feature>
<feature type="binding site" evidence="1">
    <location>
        <position position="752"/>
    </location>
    <ligand>
        <name>ATP</name>
        <dbReference type="ChEBI" id="CHEBI:30616"/>
        <label>2</label>
    </ligand>
</feature>
<feature type="binding site" evidence="1">
    <location>
        <position position="777"/>
    </location>
    <ligand>
        <name>ATP</name>
        <dbReference type="ChEBI" id="CHEBI:30616"/>
        <label>2</label>
    </ligand>
</feature>
<feature type="binding site" evidence="1">
    <location>
        <position position="778"/>
    </location>
    <ligand>
        <name>ATP</name>
        <dbReference type="ChEBI" id="CHEBI:30616"/>
        <label>2</label>
    </ligand>
</feature>
<feature type="binding site" evidence="1">
    <location>
        <position position="779"/>
    </location>
    <ligand>
        <name>ATP</name>
        <dbReference type="ChEBI" id="CHEBI:30616"/>
        <label>2</label>
    </ligand>
</feature>
<feature type="binding site" evidence="1">
    <location>
        <position position="780"/>
    </location>
    <ligand>
        <name>ATP</name>
        <dbReference type="ChEBI" id="CHEBI:30616"/>
        <label>2</label>
    </ligand>
</feature>
<feature type="binding site" evidence="1">
    <location>
        <position position="820"/>
    </location>
    <ligand>
        <name>ATP</name>
        <dbReference type="ChEBI" id="CHEBI:30616"/>
        <label>2</label>
    </ligand>
</feature>
<feature type="binding site" evidence="1">
    <location>
        <position position="820"/>
    </location>
    <ligand>
        <name>Mg(2+)</name>
        <dbReference type="ChEBI" id="CHEBI:18420"/>
        <label>3</label>
    </ligand>
</feature>
<feature type="binding site" evidence="1">
    <location>
        <position position="820"/>
    </location>
    <ligand>
        <name>Mn(2+)</name>
        <dbReference type="ChEBI" id="CHEBI:29035"/>
        <label>3</label>
    </ligand>
</feature>
<feature type="binding site" evidence="1">
    <location>
        <position position="832"/>
    </location>
    <ligand>
        <name>ATP</name>
        <dbReference type="ChEBI" id="CHEBI:30616"/>
        <label>2</label>
    </ligand>
</feature>
<feature type="binding site" evidence="1">
    <location>
        <position position="832"/>
    </location>
    <ligand>
        <name>Mg(2+)</name>
        <dbReference type="ChEBI" id="CHEBI:18420"/>
        <label>3</label>
    </ligand>
</feature>
<feature type="binding site" evidence="1">
    <location>
        <position position="832"/>
    </location>
    <ligand>
        <name>Mg(2+)</name>
        <dbReference type="ChEBI" id="CHEBI:18420"/>
        <label>4</label>
    </ligand>
</feature>
<feature type="binding site" evidence="1">
    <location>
        <position position="832"/>
    </location>
    <ligand>
        <name>Mn(2+)</name>
        <dbReference type="ChEBI" id="CHEBI:29035"/>
        <label>3</label>
    </ligand>
</feature>
<feature type="binding site" evidence="1">
    <location>
        <position position="832"/>
    </location>
    <ligand>
        <name>Mn(2+)</name>
        <dbReference type="ChEBI" id="CHEBI:29035"/>
        <label>4</label>
    </ligand>
</feature>
<feature type="binding site" evidence="1">
    <location>
        <position position="834"/>
    </location>
    <ligand>
        <name>Mg(2+)</name>
        <dbReference type="ChEBI" id="CHEBI:18420"/>
        <label>4</label>
    </ligand>
</feature>
<feature type="binding site" evidence="1">
    <location>
        <position position="834"/>
    </location>
    <ligand>
        <name>Mn(2+)</name>
        <dbReference type="ChEBI" id="CHEBI:29035"/>
        <label>4</label>
    </ligand>
</feature>
<evidence type="ECO:0000255" key="1">
    <source>
        <dbReference type="HAMAP-Rule" id="MF_01210"/>
    </source>
</evidence>
<name>CARB_STRPJ</name>
<organism>
    <name type="scientific">Streptococcus pneumoniae (strain ATCC 700669 / Spain 23F-1)</name>
    <dbReference type="NCBI Taxonomy" id="561276"/>
    <lineage>
        <taxon>Bacteria</taxon>
        <taxon>Bacillati</taxon>
        <taxon>Bacillota</taxon>
        <taxon>Bacilli</taxon>
        <taxon>Lactobacillales</taxon>
        <taxon>Streptococcaceae</taxon>
        <taxon>Streptococcus</taxon>
    </lineage>
</organism>
<keyword id="KW-0028">Amino-acid biosynthesis</keyword>
<keyword id="KW-0055">Arginine biosynthesis</keyword>
<keyword id="KW-0067">ATP-binding</keyword>
<keyword id="KW-0436">Ligase</keyword>
<keyword id="KW-0460">Magnesium</keyword>
<keyword id="KW-0464">Manganese</keyword>
<keyword id="KW-0479">Metal-binding</keyword>
<keyword id="KW-0547">Nucleotide-binding</keyword>
<keyword id="KW-0665">Pyrimidine biosynthesis</keyword>
<keyword id="KW-0677">Repeat</keyword>
<gene>
    <name evidence="1" type="primary">carB</name>
    <name type="ordered locus">SPN23F11690</name>
</gene>
<sequence length="1058" mass="116061">MPKRTDIQKIMVIGSGPIIIGQAAEFDYAGTQACLSLKEEGYEVVLVNSNPATIMTDKEIADKVYIEPITLEFVTRILRKEGPDALLPTLGGQTGLNMAMELSKNGILDELGVELLGTKLSAIDQAEDRDLFKQLMEELEQPIPESEIVNTVEEAVAFAATIGYPVIVRPAFTLGGTGGGMCANEKELREITENGLKLSPVTQCLIERSIAGFKEIEYEVMRDSADNALVVCNMENFDPVGIHTGDSIVFAPAQTMSDYENQMLRDASLSIIRALKIEGGCNVQLALDPNSFKYYVIEVNPRVSRSSALASKATGYPIAKLAAKIAVGLTLDEVINPVTGSTYAMFEPALDYVVAKIPRFPFDKFEKGERRLGTQMKATGEVMAIGRNIEESLLKACRSLEIGVHHNEIPELAAVSDDTLIEKVVKAQDDRLFYVSEAIRRGYTPEEIAELTKIDIFYLDKLLHIFEIEQELGAHPQDLEVLKTAKLNGFSDRKIAELWGTTDDKVRQLRLENKIVPVYKMVDTCAAEFDSETPYFYSTYGWENESIKSDKESVLVLGSGPIRIGQGVEFDYATVHSVKAIQAAGYEAIIMNSNPETVSTDFSVSDKLYFEPLTFEDVMNVIDLEQPKGVIVQFGGQTAINLAEPLAKAGVTILGTQVADLDRAEDRDLFEQALKELDIPQPPGQTATNEEEAALAARKIGFPVLVRPSYVLGGRAMEIVENEEDLRSYMRTAVKASPDHPVLVDSYIVGQECEVDAISDGKNVLIPGIMEHIERAGVHSGDSMAVYPPQTLSQKVQETIADYTKRLAIGLHCLGMMNIQFVIKDEKVYVIEVNPRASRTVPFLSKVTNIPMAQVATKLILGQSLSELGYQNGLYPESTRVHIKAPVFSFTKLAKVDSLLGPEMKSTGEVMGSDATLEKALYKAFEASYLHLPTFGNVVFTIADDAKEEALNLARRFQNIGYGILATEGTAAFFASHGLQAQPVGKIGDDDKDIPSFVRKGRIQAIINTVGTKRTADEDGEQIRRSAIEHGVPLFTALDTANAMLKVLESRSFVTEAI</sequence>
<comment type="function">
    <text evidence="1">Large subunit of the glutamine-dependent carbamoyl phosphate synthetase (CPSase). CPSase catalyzes the formation of carbamoyl phosphate from the ammonia moiety of glutamine, carbonate, and phosphate donated by ATP, constituting the first step of 2 biosynthetic pathways, one leading to arginine and/or urea and the other to pyrimidine nucleotides. The large subunit (synthetase) binds the substrates ammonia (free or transferred from glutamine from the small subunit), hydrogencarbonate and ATP and carries out an ATP-coupled ligase reaction, activating hydrogencarbonate by forming carboxy phosphate which reacts with ammonia to form carbamoyl phosphate.</text>
</comment>
<comment type="catalytic activity">
    <reaction evidence="1">
        <text>hydrogencarbonate + L-glutamine + 2 ATP + H2O = carbamoyl phosphate + L-glutamate + 2 ADP + phosphate + 2 H(+)</text>
        <dbReference type="Rhea" id="RHEA:18633"/>
        <dbReference type="ChEBI" id="CHEBI:15377"/>
        <dbReference type="ChEBI" id="CHEBI:15378"/>
        <dbReference type="ChEBI" id="CHEBI:17544"/>
        <dbReference type="ChEBI" id="CHEBI:29985"/>
        <dbReference type="ChEBI" id="CHEBI:30616"/>
        <dbReference type="ChEBI" id="CHEBI:43474"/>
        <dbReference type="ChEBI" id="CHEBI:58228"/>
        <dbReference type="ChEBI" id="CHEBI:58359"/>
        <dbReference type="ChEBI" id="CHEBI:456216"/>
        <dbReference type="EC" id="6.3.5.5"/>
    </reaction>
</comment>
<comment type="catalytic activity">
    <molecule>Carbamoyl phosphate synthase large chain</molecule>
    <reaction evidence="1">
        <text>hydrogencarbonate + NH4(+) + 2 ATP = carbamoyl phosphate + 2 ADP + phosphate + 2 H(+)</text>
        <dbReference type="Rhea" id="RHEA:18029"/>
        <dbReference type="ChEBI" id="CHEBI:15378"/>
        <dbReference type="ChEBI" id="CHEBI:17544"/>
        <dbReference type="ChEBI" id="CHEBI:28938"/>
        <dbReference type="ChEBI" id="CHEBI:30616"/>
        <dbReference type="ChEBI" id="CHEBI:43474"/>
        <dbReference type="ChEBI" id="CHEBI:58228"/>
        <dbReference type="ChEBI" id="CHEBI:456216"/>
        <dbReference type="EC" id="6.3.4.16"/>
    </reaction>
</comment>
<comment type="cofactor">
    <cofactor evidence="1">
        <name>Mg(2+)</name>
        <dbReference type="ChEBI" id="CHEBI:18420"/>
    </cofactor>
    <cofactor evidence="1">
        <name>Mn(2+)</name>
        <dbReference type="ChEBI" id="CHEBI:29035"/>
    </cofactor>
    <text evidence="1">Binds 4 Mg(2+) or Mn(2+) ions per subunit.</text>
</comment>
<comment type="pathway">
    <text evidence="1">Amino-acid biosynthesis; L-arginine biosynthesis; carbamoyl phosphate from bicarbonate: step 1/1.</text>
</comment>
<comment type="pathway">
    <text evidence="1">Pyrimidine metabolism; UMP biosynthesis via de novo pathway; (S)-dihydroorotate from bicarbonate: step 1/3.</text>
</comment>
<comment type="subunit">
    <text evidence="1">Composed of two chains; the small (or glutamine) chain promotes the hydrolysis of glutamine to ammonia, which is used by the large (or ammonia) chain to synthesize carbamoyl phosphate. Tetramer of heterodimers (alpha,beta)4.</text>
</comment>
<comment type="domain">
    <text evidence="1">The large subunit is composed of 2 ATP-grasp domains that are involved in binding the 2 ATP molecules needed for carbamoyl phosphate synthesis. The N-terminal ATP-grasp domain (referred to as the carboxyphosphate synthetic component) catalyzes the ATP-dependent phosphorylation of hydrogencarbonate to carboxyphosphate and the subsequent nucleophilic attack by ammonia to form a carbamate intermediate. The C-terminal ATP-grasp domain (referred to as the carbamoyl phosphate synthetic component) then catalyzes the phosphorylation of carbamate with the second ATP to form the end product carbamoyl phosphate. The reactive and unstable enzyme intermediates are sequentially channeled from one active site to the next through the interior of the protein over a distance of at least 96 A.</text>
</comment>
<comment type="similarity">
    <text evidence="1">Belongs to the CarB family.</text>
</comment>
<dbReference type="EC" id="6.3.4.16" evidence="1"/>
<dbReference type="EC" id="6.3.5.5" evidence="1"/>
<dbReference type="EMBL" id="FM211187">
    <property type="protein sequence ID" value="CAR68975.1"/>
    <property type="molecule type" value="Genomic_DNA"/>
</dbReference>
<dbReference type="RefSeq" id="WP_001126409.1">
    <property type="nucleotide sequence ID" value="NC_011900.1"/>
</dbReference>
<dbReference type="SMR" id="B8ZJT9"/>
<dbReference type="KEGG" id="sne:SPN23F11690"/>
<dbReference type="HOGENOM" id="CLU_000513_1_2_9"/>
<dbReference type="UniPathway" id="UPA00068">
    <property type="reaction ID" value="UER00171"/>
</dbReference>
<dbReference type="UniPathway" id="UPA00070">
    <property type="reaction ID" value="UER00115"/>
</dbReference>
<dbReference type="GO" id="GO:0005737">
    <property type="term" value="C:cytoplasm"/>
    <property type="evidence" value="ECO:0007669"/>
    <property type="project" value="TreeGrafter"/>
</dbReference>
<dbReference type="GO" id="GO:0005524">
    <property type="term" value="F:ATP binding"/>
    <property type="evidence" value="ECO:0007669"/>
    <property type="project" value="UniProtKB-UniRule"/>
</dbReference>
<dbReference type="GO" id="GO:0004087">
    <property type="term" value="F:carbamoyl-phosphate synthase (ammonia) activity"/>
    <property type="evidence" value="ECO:0007669"/>
    <property type="project" value="RHEA"/>
</dbReference>
<dbReference type="GO" id="GO:0004088">
    <property type="term" value="F:carbamoyl-phosphate synthase (glutamine-hydrolyzing) activity"/>
    <property type="evidence" value="ECO:0007669"/>
    <property type="project" value="UniProtKB-UniRule"/>
</dbReference>
<dbReference type="GO" id="GO:0046872">
    <property type="term" value="F:metal ion binding"/>
    <property type="evidence" value="ECO:0007669"/>
    <property type="project" value="UniProtKB-KW"/>
</dbReference>
<dbReference type="GO" id="GO:0044205">
    <property type="term" value="P:'de novo' UMP biosynthetic process"/>
    <property type="evidence" value="ECO:0007669"/>
    <property type="project" value="UniProtKB-UniRule"/>
</dbReference>
<dbReference type="GO" id="GO:0006541">
    <property type="term" value="P:glutamine metabolic process"/>
    <property type="evidence" value="ECO:0007669"/>
    <property type="project" value="TreeGrafter"/>
</dbReference>
<dbReference type="GO" id="GO:0006526">
    <property type="term" value="P:L-arginine biosynthetic process"/>
    <property type="evidence" value="ECO:0007669"/>
    <property type="project" value="UniProtKB-UniRule"/>
</dbReference>
<dbReference type="CDD" id="cd01424">
    <property type="entry name" value="MGS_CPS_II"/>
    <property type="match status" value="1"/>
</dbReference>
<dbReference type="FunFam" id="1.10.1030.10:FF:000002">
    <property type="entry name" value="Carbamoyl-phosphate synthase large chain"/>
    <property type="match status" value="1"/>
</dbReference>
<dbReference type="FunFam" id="3.30.1490.20:FF:000001">
    <property type="entry name" value="Carbamoyl-phosphate synthase large chain"/>
    <property type="match status" value="1"/>
</dbReference>
<dbReference type="FunFam" id="3.30.470.20:FF:000001">
    <property type="entry name" value="Carbamoyl-phosphate synthase large chain"/>
    <property type="match status" value="1"/>
</dbReference>
<dbReference type="FunFam" id="3.30.470.20:FF:000026">
    <property type="entry name" value="Carbamoyl-phosphate synthase large chain"/>
    <property type="match status" value="1"/>
</dbReference>
<dbReference type="FunFam" id="3.40.50.1380:FF:000017">
    <property type="entry name" value="Carbamoyl-phosphate synthase large chain"/>
    <property type="match status" value="1"/>
</dbReference>
<dbReference type="FunFam" id="3.40.50.20:FF:000001">
    <property type="entry name" value="Carbamoyl-phosphate synthase large chain"/>
    <property type="match status" value="2"/>
</dbReference>
<dbReference type="Gene3D" id="3.40.50.20">
    <property type="match status" value="2"/>
</dbReference>
<dbReference type="Gene3D" id="3.30.1490.20">
    <property type="entry name" value="ATP-grasp fold, A domain"/>
    <property type="match status" value="1"/>
</dbReference>
<dbReference type="Gene3D" id="3.30.470.20">
    <property type="entry name" value="ATP-grasp fold, B domain"/>
    <property type="match status" value="2"/>
</dbReference>
<dbReference type="Gene3D" id="1.10.1030.10">
    <property type="entry name" value="Carbamoyl-phosphate synthetase, large subunit oligomerisation domain"/>
    <property type="match status" value="1"/>
</dbReference>
<dbReference type="Gene3D" id="3.40.50.1380">
    <property type="entry name" value="Methylglyoxal synthase-like domain"/>
    <property type="match status" value="1"/>
</dbReference>
<dbReference type="HAMAP" id="MF_01210_B">
    <property type="entry name" value="CPSase_L_chain_B"/>
    <property type="match status" value="1"/>
</dbReference>
<dbReference type="InterPro" id="IPR011761">
    <property type="entry name" value="ATP-grasp"/>
</dbReference>
<dbReference type="InterPro" id="IPR013815">
    <property type="entry name" value="ATP_grasp_subdomain_1"/>
</dbReference>
<dbReference type="InterPro" id="IPR006275">
    <property type="entry name" value="CarbamoylP_synth_lsu"/>
</dbReference>
<dbReference type="InterPro" id="IPR005480">
    <property type="entry name" value="CarbamoylP_synth_lsu_oligo"/>
</dbReference>
<dbReference type="InterPro" id="IPR036897">
    <property type="entry name" value="CarbamoylP_synth_lsu_oligo_sf"/>
</dbReference>
<dbReference type="InterPro" id="IPR005479">
    <property type="entry name" value="CbamoylP_synth_lsu-like_ATP-bd"/>
</dbReference>
<dbReference type="InterPro" id="IPR005483">
    <property type="entry name" value="CbamoylP_synth_lsu_CPSase_dom"/>
</dbReference>
<dbReference type="InterPro" id="IPR011607">
    <property type="entry name" value="MGS-like_dom"/>
</dbReference>
<dbReference type="InterPro" id="IPR036914">
    <property type="entry name" value="MGS-like_dom_sf"/>
</dbReference>
<dbReference type="InterPro" id="IPR033937">
    <property type="entry name" value="MGS_CPS_CarB"/>
</dbReference>
<dbReference type="InterPro" id="IPR016185">
    <property type="entry name" value="PreATP-grasp_dom_sf"/>
</dbReference>
<dbReference type="NCBIfam" id="TIGR01369">
    <property type="entry name" value="CPSaseII_lrg"/>
    <property type="match status" value="1"/>
</dbReference>
<dbReference type="NCBIfam" id="NF003671">
    <property type="entry name" value="PRK05294.1"/>
    <property type="match status" value="1"/>
</dbReference>
<dbReference type="NCBIfam" id="NF009455">
    <property type="entry name" value="PRK12815.1"/>
    <property type="match status" value="1"/>
</dbReference>
<dbReference type="PANTHER" id="PTHR11405:SF53">
    <property type="entry name" value="CARBAMOYL-PHOSPHATE SYNTHASE [AMMONIA], MITOCHONDRIAL"/>
    <property type="match status" value="1"/>
</dbReference>
<dbReference type="PANTHER" id="PTHR11405">
    <property type="entry name" value="CARBAMOYLTRANSFERASE FAMILY MEMBER"/>
    <property type="match status" value="1"/>
</dbReference>
<dbReference type="Pfam" id="PF02786">
    <property type="entry name" value="CPSase_L_D2"/>
    <property type="match status" value="2"/>
</dbReference>
<dbReference type="Pfam" id="PF02787">
    <property type="entry name" value="CPSase_L_D3"/>
    <property type="match status" value="1"/>
</dbReference>
<dbReference type="Pfam" id="PF02142">
    <property type="entry name" value="MGS"/>
    <property type="match status" value="1"/>
</dbReference>
<dbReference type="PRINTS" id="PR00098">
    <property type="entry name" value="CPSASE"/>
</dbReference>
<dbReference type="SMART" id="SM01096">
    <property type="entry name" value="CPSase_L_D3"/>
    <property type="match status" value="1"/>
</dbReference>
<dbReference type="SMART" id="SM01209">
    <property type="entry name" value="GARS_A"/>
    <property type="match status" value="1"/>
</dbReference>
<dbReference type="SMART" id="SM00851">
    <property type="entry name" value="MGS"/>
    <property type="match status" value="1"/>
</dbReference>
<dbReference type="SUPFAM" id="SSF48108">
    <property type="entry name" value="Carbamoyl phosphate synthetase, large subunit connection domain"/>
    <property type="match status" value="1"/>
</dbReference>
<dbReference type="SUPFAM" id="SSF56059">
    <property type="entry name" value="Glutathione synthetase ATP-binding domain-like"/>
    <property type="match status" value="2"/>
</dbReference>
<dbReference type="SUPFAM" id="SSF52335">
    <property type="entry name" value="Methylglyoxal synthase-like"/>
    <property type="match status" value="1"/>
</dbReference>
<dbReference type="SUPFAM" id="SSF52440">
    <property type="entry name" value="PreATP-grasp domain"/>
    <property type="match status" value="2"/>
</dbReference>
<dbReference type="PROSITE" id="PS50975">
    <property type="entry name" value="ATP_GRASP"/>
    <property type="match status" value="2"/>
</dbReference>
<dbReference type="PROSITE" id="PS00866">
    <property type="entry name" value="CPSASE_1"/>
    <property type="match status" value="2"/>
</dbReference>
<dbReference type="PROSITE" id="PS00867">
    <property type="entry name" value="CPSASE_2"/>
    <property type="match status" value="2"/>
</dbReference>
<dbReference type="PROSITE" id="PS51855">
    <property type="entry name" value="MGS"/>
    <property type="match status" value="1"/>
</dbReference>
<accession>B8ZJT9</accession>
<reference key="1">
    <citation type="journal article" date="2009" name="J. Bacteriol.">
        <title>Role of conjugative elements in the evolution of the multidrug-resistant pandemic clone Streptococcus pneumoniae Spain23F ST81.</title>
        <authorList>
            <person name="Croucher N.J."/>
            <person name="Walker D."/>
            <person name="Romero P."/>
            <person name="Lennard N."/>
            <person name="Paterson G.K."/>
            <person name="Bason N.C."/>
            <person name="Mitchell A.M."/>
            <person name="Quail M.A."/>
            <person name="Andrew P.W."/>
            <person name="Parkhill J."/>
            <person name="Bentley S.D."/>
            <person name="Mitchell T.J."/>
        </authorList>
    </citation>
    <scope>NUCLEOTIDE SEQUENCE [LARGE SCALE GENOMIC DNA]</scope>
    <source>
        <strain>ATCC 700669 / Spain 23F-1</strain>
    </source>
</reference>
<proteinExistence type="inferred from homology"/>
<protein>
    <recommendedName>
        <fullName evidence="1">Carbamoyl phosphate synthase large chain</fullName>
        <ecNumber evidence="1">6.3.4.16</ecNumber>
        <ecNumber evidence="1">6.3.5.5</ecNumber>
    </recommendedName>
    <alternativeName>
        <fullName evidence="1">Carbamoyl phosphate synthetase ammonia chain</fullName>
    </alternativeName>
</protein>